<sequence>MRIPRIYHPISLENQTQCYLSEDAANHVARVLRMTEGEQLELFDGSNHIYPAKIIESNKKSVKVEILGRELADKESHLKIHLGQVISRGERMEFTIQKSVELGVNVITPLWSERCGVKLDAERMDKKIQQWQKIAIAACEQCGRNIVPEIRPLMKLQDWCAENDGALKLNLHPRAHYSIKTLPTIPAGGVRLLIGSEGGLSAQEIAQTEQQGFTEILLGKRVLRTETASLAAISALQICFGDLGE</sequence>
<protein>
    <recommendedName>
        <fullName>Ribosomal RNA small subunit methyltransferase E</fullName>
        <ecNumber>2.1.1.193</ecNumber>
    </recommendedName>
    <alternativeName>
        <fullName>16S rRNA m3U1498 methyltransferase</fullName>
    </alternativeName>
</protein>
<keyword id="KW-0002">3D-structure</keyword>
<keyword id="KW-0963">Cytoplasm</keyword>
<keyword id="KW-0489">Methyltransferase</keyword>
<keyword id="KW-1185">Reference proteome</keyword>
<keyword id="KW-0698">rRNA processing</keyword>
<keyword id="KW-0949">S-adenosyl-L-methionine</keyword>
<keyword id="KW-0808">Transferase</keyword>
<organism>
    <name type="scientific">Haemophilus influenzae (strain ATCC 51907 / DSM 11121 / KW20 / Rd)</name>
    <dbReference type="NCBI Taxonomy" id="71421"/>
    <lineage>
        <taxon>Bacteria</taxon>
        <taxon>Pseudomonadati</taxon>
        <taxon>Pseudomonadota</taxon>
        <taxon>Gammaproteobacteria</taxon>
        <taxon>Pasteurellales</taxon>
        <taxon>Pasteurellaceae</taxon>
        <taxon>Haemophilus</taxon>
    </lineage>
</organism>
<dbReference type="EC" id="2.1.1.193"/>
<dbReference type="EMBL" id="L42023">
    <property type="protein sequence ID" value="AAC21968.1"/>
    <property type="molecule type" value="Genomic_DNA"/>
</dbReference>
<dbReference type="PIR" id="D64147">
    <property type="entry name" value="D64147"/>
</dbReference>
<dbReference type="RefSeq" id="NP_438470.1">
    <property type="nucleotide sequence ID" value="NC_000907.1"/>
</dbReference>
<dbReference type="PDB" id="1NXZ">
    <property type="method" value="X-ray"/>
    <property type="resolution" value="2.00 A"/>
    <property type="chains" value="A/B=2-245"/>
</dbReference>
<dbReference type="PDB" id="1VHY">
    <property type="method" value="X-ray"/>
    <property type="resolution" value="1.90 A"/>
    <property type="chains" value="A/B=2-245"/>
</dbReference>
<dbReference type="PDBsum" id="1NXZ"/>
<dbReference type="PDBsum" id="1VHY"/>
<dbReference type="SMR" id="P44627"/>
<dbReference type="STRING" id="71421.HI_0303"/>
<dbReference type="EnsemblBacteria" id="AAC21968">
    <property type="protein sequence ID" value="AAC21968"/>
    <property type="gene ID" value="HI_0303"/>
</dbReference>
<dbReference type="KEGG" id="hin:HI_0303"/>
<dbReference type="PATRIC" id="fig|71421.8.peg.320"/>
<dbReference type="eggNOG" id="COG1385">
    <property type="taxonomic scope" value="Bacteria"/>
</dbReference>
<dbReference type="HOGENOM" id="CLU_067442_5_1_6"/>
<dbReference type="OrthoDB" id="9815641at2"/>
<dbReference type="PhylomeDB" id="P44627"/>
<dbReference type="BioCyc" id="HINF71421:G1GJ1-321-MONOMER"/>
<dbReference type="EvolutionaryTrace" id="P44627"/>
<dbReference type="Proteomes" id="UP000000579">
    <property type="component" value="Chromosome"/>
</dbReference>
<dbReference type="GO" id="GO:0005737">
    <property type="term" value="C:cytoplasm"/>
    <property type="evidence" value="ECO:0007669"/>
    <property type="project" value="UniProtKB-SubCell"/>
</dbReference>
<dbReference type="GO" id="GO:0070042">
    <property type="term" value="F:rRNA (uridine-N3-)-methyltransferase activity"/>
    <property type="evidence" value="ECO:0000318"/>
    <property type="project" value="GO_Central"/>
</dbReference>
<dbReference type="GO" id="GO:0070475">
    <property type="term" value="P:rRNA base methylation"/>
    <property type="evidence" value="ECO:0000318"/>
    <property type="project" value="GO_Central"/>
</dbReference>
<dbReference type="CDD" id="cd18084">
    <property type="entry name" value="RsmE-like"/>
    <property type="match status" value="1"/>
</dbReference>
<dbReference type="FunFam" id="2.40.240.20:FF:000001">
    <property type="entry name" value="Ribosomal RNA small subunit methyltransferase E"/>
    <property type="match status" value="1"/>
</dbReference>
<dbReference type="FunFam" id="3.40.1280.10:FF:000007">
    <property type="entry name" value="Ribosomal RNA small subunit methyltransferase E"/>
    <property type="match status" value="1"/>
</dbReference>
<dbReference type="Gene3D" id="3.40.1280.10">
    <property type="match status" value="1"/>
</dbReference>
<dbReference type="Gene3D" id="2.40.240.20">
    <property type="entry name" value="Hypothetical PUA domain-like, domain 1"/>
    <property type="match status" value="1"/>
</dbReference>
<dbReference type="InterPro" id="IPR029028">
    <property type="entry name" value="Alpha/beta_knot_MTases"/>
</dbReference>
<dbReference type="InterPro" id="IPR015947">
    <property type="entry name" value="PUA-like_sf"/>
</dbReference>
<dbReference type="InterPro" id="IPR006700">
    <property type="entry name" value="RsmE"/>
</dbReference>
<dbReference type="InterPro" id="IPR046886">
    <property type="entry name" value="RsmE_MTase_dom"/>
</dbReference>
<dbReference type="InterPro" id="IPR046887">
    <property type="entry name" value="RsmE_PUA-like"/>
</dbReference>
<dbReference type="InterPro" id="IPR029026">
    <property type="entry name" value="tRNA_m1G_MTases_N"/>
</dbReference>
<dbReference type="NCBIfam" id="NF008690">
    <property type="entry name" value="PRK11713.1-1"/>
    <property type="match status" value="1"/>
</dbReference>
<dbReference type="NCBIfam" id="NF008692">
    <property type="entry name" value="PRK11713.1-5"/>
    <property type="match status" value="1"/>
</dbReference>
<dbReference type="NCBIfam" id="TIGR00046">
    <property type="entry name" value="RsmE family RNA methyltransferase"/>
    <property type="match status" value="1"/>
</dbReference>
<dbReference type="PANTHER" id="PTHR30027:SF3">
    <property type="entry name" value="16S RRNA (URACIL(1498)-N(3))-METHYLTRANSFERASE"/>
    <property type="match status" value="1"/>
</dbReference>
<dbReference type="PANTHER" id="PTHR30027">
    <property type="entry name" value="RIBOSOMAL RNA SMALL SUBUNIT METHYLTRANSFERASE E"/>
    <property type="match status" value="1"/>
</dbReference>
<dbReference type="Pfam" id="PF04452">
    <property type="entry name" value="Methyltrans_RNA"/>
    <property type="match status" value="1"/>
</dbReference>
<dbReference type="Pfam" id="PF20260">
    <property type="entry name" value="PUA_4"/>
    <property type="match status" value="1"/>
</dbReference>
<dbReference type="PIRSF" id="PIRSF015601">
    <property type="entry name" value="MTase_slr0722"/>
    <property type="match status" value="1"/>
</dbReference>
<dbReference type="SUPFAM" id="SSF75217">
    <property type="entry name" value="alpha/beta knot"/>
    <property type="match status" value="1"/>
</dbReference>
<dbReference type="SUPFAM" id="SSF88697">
    <property type="entry name" value="PUA domain-like"/>
    <property type="match status" value="1"/>
</dbReference>
<gene>
    <name type="primary">rsmE</name>
    <name type="ordered locus">HI_0303</name>
</gene>
<reference key="1">
    <citation type="journal article" date="1995" name="Science">
        <title>Whole-genome random sequencing and assembly of Haemophilus influenzae Rd.</title>
        <authorList>
            <person name="Fleischmann R.D."/>
            <person name="Adams M.D."/>
            <person name="White O."/>
            <person name="Clayton R.A."/>
            <person name="Kirkness E.F."/>
            <person name="Kerlavage A.R."/>
            <person name="Bult C.J."/>
            <person name="Tomb J.-F."/>
            <person name="Dougherty B.A."/>
            <person name="Merrick J.M."/>
            <person name="McKenney K."/>
            <person name="Sutton G.G."/>
            <person name="FitzHugh W."/>
            <person name="Fields C.A."/>
            <person name="Gocayne J.D."/>
            <person name="Scott J.D."/>
            <person name="Shirley R."/>
            <person name="Liu L.-I."/>
            <person name="Glodek A."/>
            <person name="Kelley J.M."/>
            <person name="Weidman J.F."/>
            <person name="Phillips C.A."/>
            <person name="Spriggs T."/>
            <person name="Hedblom E."/>
            <person name="Cotton M.D."/>
            <person name="Utterback T.R."/>
            <person name="Hanna M.C."/>
            <person name="Nguyen D.T."/>
            <person name="Saudek D.M."/>
            <person name="Brandon R.C."/>
            <person name="Fine L.D."/>
            <person name="Fritchman J.L."/>
            <person name="Fuhrmann J.L."/>
            <person name="Geoghagen N.S.M."/>
            <person name="Gnehm C.L."/>
            <person name="McDonald L.A."/>
            <person name="Small K.V."/>
            <person name="Fraser C.M."/>
            <person name="Smith H.O."/>
            <person name="Venter J.C."/>
        </authorList>
    </citation>
    <scope>NUCLEOTIDE SEQUENCE [LARGE SCALE GENOMIC DNA]</scope>
    <source>
        <strain>ATCC 51907 / DSM 11121 / KW20 / Rd</strain>
    </source>
</reference>
<reference key="2">
    <citation type="journal article" date="2003" name="Proteins">
        <title>Functional assignment based on structural analysis: crystal structure of the yggJ protein (HI0303) of Haemophilus influenzae reveals an RNA methyltransferase with a deep trefoil knot.</title>
        <authorList>
            <person name="Forouhar F."/>
            <person name="Shen J."/>
            <person name="Xiao R."/>
            <person name="Acton T.B."/>
            <person name="Montelione G.T."/>
            <person name="Tong L."/>
        </authorList>
    </citation>
    <scope>X-RAY CRYSTALLOGRAPHY (2.0 ANGSTROMS) OF 2-245</scope>
    <scope>IDENTIFICATION AS PUTATIVE RNA METHYLTRANSFERASE</scope>
</reference>
<reference key="3">
    <citation type="journal article" date="2005" name="Proteins">
        <title>Structural analysis of a set of proteins resulting from a bacterial genomics project.</title>
        <authorList>
            <person name="Badger J."/>
            <person name="Sauder J.M."/>
            <person name="Adams J.M."/>
            <person name="Antonysamy S."/>
            <person name="Bain K."/>
            <person name="Bergseid M.G."/>
            <person name="Buchanan S.G."/>
            <person name="Buchanan M.D."/>
            <person name="Batiyenko Y."/>
            <person name="Christopher J.A."/>
            <person name="Emtage S."/>
            <person name="Eroshkina A."/>
            <person name="Feil I."/>
            <person name="Furlong E.B."/>
            <person name="Gajiwala K.S."/>
            <person name="Gao X."/>
            <person name="He D."/>
            <person name="Hendle J."/>
            <person name="Huber A."/>
            <person name="Hoda K."/>
            <person name="Kearins P."/>
            <person name="Kissinger C."/>
            <person name="Laubert B."/>
            <person name="Lewis H.A."/>
            <person name="Lin J."/>
            <person name="Loomis K."/>
            <person name="Lorimer D."/>
            <person name="Louie G."/>
            <person name="Maletic M."/>
            <person name="Marsh C.D."/>
            <person name="Miller I."/>
            <person name="Molinari J."/>
            <person name="Muller-Dieckmann H.J."/>
            <person name="Newman J.M."/>
            <person name="Noland B.W."/>
            <person name="Pagarigan B."/>
            <person name="Park F."/>
            <person name="Peat T.S."/>
            <person name="Post K.W."/>
            <person name="Radojicic S."/>
            <person name="Ramos A."/>
            <person name="Romero R."/>
            <person name="Rutter M.E."/>
            <person name="Sanderson W.E."/>
            <person name="Schwinn K.D."/>
            <person name="Tresser J."/>
            <person name="Winhoven J."/>
            <person name="Wright T.A."/>
            <person name="Wu L."/>
            <person name="Xu J."/>
            <person name="Harris T.J.R."/>
        </authorList>
    </citation>
    <scope>X-RAY CRYSTALLOGRAPHY (1.9 ANGSTROMS) OF 2-245</scope>
</reference>
<evidence type="ECO:0000250" key="1"/>
<evidence type="ECO:0000305" key="2"/>
<evidence type="ECO:0007829" key="3">
    <source>
        <dbReference type="PDB" id="1NXZ"/>
    </source>
</evidence>
<evidence type="ECO:0007829" key="4">
    <source>
        <dbReference type="PDB" id="1VHY"/>
    </source>
</evidence>
<comment type="function">
    <text evidence="1">Specifically methylates the N3 position of the uracil ring of uridine 1498 (m3U1498) in 16S rRNA. Acts on the fully assembled 30S ribosomal subunit (By similarity).</text>
</comment>
<comment type="catalytic activity">
    <reaction>
        <text>uridine(1498) in 16S rRNA + S-adenosyl-L-methionine = N(3)-methyluridine(1498) in 16S rRNA + S-adenosyl-L-homocysteine + H(+)</text>
        <dbReference type="Rhea" id="RHEA:42920"/>
        <dbReference type="Rhea" id="RHEA-COMP:10283"/>
        <dbReference type="Rhea" id="RHEA-COMP:10284"/>
        <dbReference type="ChEBI" id="CHEBI:15378"/>
        <dbReference type="ChEBI" id="CHEBI:57856"/>
        <dbReference type="ChEBI" id="CHEBI:59789"/>
        <dbReference type="ChEBI" id="CHEBI:65315"/>
        <dbReference type="ChEBI" id="CHEBI:74502"/>
        <dbReference type="EC" id="2.1.1.193"/>
    </reaction>
</comment>
<comment type="subcellular location">
    <subcellularLocation>
        <location evidence="1">Cytoplasm</location>
    </subcellularLocation>
</comment>
<comment type="similarity">
    <text evidence="2">Belongs to the RNA methyltransferase RsmE family.</text>
</comment>
<feature type="chain" id="PRO_0000176202" description="Ribosomal RNA small subunit methyltransferase E">
    <location>
        <begin position="1"/>
        <end position="245"/>
    </location>
</feature>
<feature type="strand" evidence="4">
    <location>
        <begin position="5"/>
        <end position="7"/>
    </location>
</feature>
<feature type="strand" evidence="4">
    <location>
        <begin position="16"/>
        <end position="19"/>
    </location>
</feature>
<feature type="helix" evidence="4">
    <location>
        <begin position="22"/>
        <end position="29"/>
    </location>
</feature>
<feature type="strand" evidence="4">
    <location>
        <begin position="39"/>
        <end position="43"/>
    </location>
</feature>
<feature type="strand" evidence="4">
    <location>
        <begin position="45"/>
        <end position="57"/>
    </location>
</feature>
<feature type="strand" evidence="4">
    <location>
        <begin position="62"/>
        <end position="66"/>
    </location>
</feature>
<feature type="strand" evidence="4">
    <location>
        <begin position="80"/>
        <end position="85"/>
    </location>
</feature>
<feature type="strand" evidence="3">
    <location>
        <begin position="88"/>
        <end position="90"/>
    </location>
</feature>
<feature type="helix" evidence="4">
    <location>
        <begin position="93"/>
        <end position="101"/>
    </location>
</feature>
<feature type="strand" evidence="4">
    <location>
        <begin position="106"/>
        <end position="111"/>
    </location>
</feature>
<feature type="strand" evidence="4">
    <location>
        <begin position="115"/>
        <end position="117"/>
    </location>
</feature>
<feature type="helix" evidence="4">
    <location>
        <begin position="121"/>
        <end position="142"/>
    </location>
</feature>
<feature type="helix" evidence="4">
    <location>
        <begin position="156"/>
        <end position="160"/>
    </location>
</feature>
<feature type="strand" evidence="4">
    <location>
        <begin position="167"/>
        <end position="171"/>
    </location>
</feature>
<feature type="helix" evidence="4">
    <location>
        <begin position="179"/>
        <end position="181"/>
    </location>
</feature>
<feature type="strand" evidence="4">
    <location>
        <begin position="190"/>
        <end position="194"/>
    </location>
</feature>
<feature type="helix" evidence="4">
    <location>
        <begin position="202"/>
        <end position="210"/>
    </location>
</feature>
<feature type="strand" evidence="4">
    <location>
        <begin position="214"/>
        <end position="217"/>
    </location>
</feature>
<feature type="helix" evidence="4">
    <location>
        <begin position="225"/>
        <end position="239"/>
    </location>
</feature>
<feature type="helix" evidence="4">
    <location>
        <begin position="242"/>
        <end position="244"/>
    </location>
</feature>
<name>RSME_HAEIN</name>
<proteinExistence type="evidence at protein level"/>
<accession>P44627</accession>